<protein>
    <recommendedName>
        <fullName>UPF0056 membrane protein MJ0972</fullName>
    </recommendedName>
</protein>
<evidence type="ECO:0000255" key="1"/>
<evidence type="ECO:0000305" key="2"/>
<organism>
    <name type="scientific">Methanocaldococcus jannaschii (strain ATCC 43067 / DSM 2661 / JAL-1 / JCM 10045 / NBRC 100440)</name>
    <name type="common">Methanococcus jannaschii</name>
    <dbReference type="NCBI Taxonomy" id="243232"/>
    <lineage>
        <taxon>Archaea</taxon>
        <taxon>Methanobacteriati</taxon>
        <taxon>Methanobacteriota</taxon>
        <taxon>Methanomada group</taxon>
        <taxon>Methanococci</taxon>
        <taxon>Methanococcales</taxon>
        <taxon>Methanocaldococcaceae</taxon>
        <taxon>Methanocaldococcus</taxon>
    </lineage>
</organism>
<name>Y972_METJA</name>
<comment type="subcellular location">
    <subcellularLocation>
        <location evidence="2">Cell membrane</location>
        <topology evidence="2">Multi-pass membrane protein</topology>
    </subcellularLocation>
</comment>
<comment type="similarity">
    <text evidence="2">Belongs to the UPF0056 (MarC) family.</text>
</comment>
<keyword id="KW-1003">Cell membrane</keyword>
<keyword id="KW-0472">Membrane</keyword>
<keyword id="KW-1185">Reference proteome</keyword>
<keyword id="KW-0812">Transmembrane</keyword>
<keyword id="KW-1133">Transmembrane helix</keyword>
<gene>
    <name type="ordered locus">MJ0972</name>
</gene>
<accession>Q58382</accession>
<sequence length="228" mass="25360">MVGYSGEHFIFNVVKYMDILNFYIYGFVSLFITIDPIGLIPIVHSLTYPYPKEQRIRIIKKAIISSTVVLLLFALFGNYIFGYFGITIDAFRVAGGILLFKIAWDMLHAEIPKTKHKPDERLDLEDIDSIVYVPLAIPLISGPGAITTTMILISKTQSILEKGVVVLSILSAMLVSGIILSLTDFIIRRVNIYGINAFVRIMGLLLVAISVQIIFTGIVGLYNSISVQ</sequence>
<proteinExistence type="inferred from homology"/>
<feature type="chain" id="PRO_0000156917" description="UPF0056 membrane protein MJ0972">
    <location>
        <begin position="1"/>
        <end position="228"/>
    </location>
</feature>
<feature type="transmembrane region" description="Helical" evidence="1">
    <location>
        <begin position="22"/>
        <end position="42"/>
    </location>
</feature>
<feature type="transmembrane region" description="Helical" evidence="1">
    <location>
        <begin position="68"/>
        <end position="88"/>
    </location>
</feature>
<feature type="transmembrane region" description="Helical" evidence="1">
    <location>
        <begin position="133"/>
        <end position="153"/>
    </location>
</feature>
<feature type="transmembrane region" description="Helical" evidence="1">
    <location>
        <begin position="163"/>
        <end position="183"/>
    </location>
</feature>
<feature type="transmembrane region" description="Helical" evidence="1">
    <location>
        <begin position="201"/>
        <end position="221"/>
    </location>
</feature>
<dbReference type="EMBL" id="L77117">
    <property type="protein sequence ID" value="AAB98977.1"/>
    <property type="molecule type" value="Genomic_DNA"/>
</dbReference>
<dbReference type="PIR" id="D64421">
    <property type="entry name" value="D64421"/>
</dbReference>
<dbReference type="FunCoup" id="Q58382">
    <property type="interactions" value="2"/>
</dbReference>
<dbReference type="STRING" id="243232.MJ_0972"/>
<dbReference type="PaxDb" id="243232-MJ_0972"/>
<dbReference type="EnsemblBacteria" id="AAB98977">
    <property type="protein sequence ID" value="AAB98977"/>
    <property type="gene ID" value="MJ_0972"/>
</dbReference>
<dbReference type="KEGG" id="mja:MJ_0972"/>
<dbReference type="eggNOG" id="arCOG01997">
    <property type="taxonomic scope" value="Archaea"/>
</dbReference>
<dbReference type="HOGENOM" id="CLU_079909_1_0_2"/>
<dbReference type="InParanoid" id="Q58382"/>
<dbReference type="PhylomeDB" id="Q58382"/>
<dbReference type="Proteomes" id="UP000000805">
    <property type="component" value="Chromosome"/>
</dbReference>
<dbReference type="GO" id="GO:0005886">
    <property type="term" value="C:plasma membrane"/>
    <property type="evidence" value="ECO:0007669"/>
    <property type="project" value="UniProtKB-SubCell"/>
</dbReference>
<dbReference type="InterPro" id="IPR002771">
    <property type="entry name" value="Multi_antbiot-R_MarC"/>
</dbReference>
<dbReference type="NCBIfam" id="TIGR00427">
    <property type="entry name" value="NAAT family transporter"/>
    <property type="match status" value="1"/>
</dbReference>
<dbReference type="PANTHER" id="PTHR33508">
    <property type="entry name" value="UPF0056 MEMBRANE PROTEIN YHCE"/>
    <property type="match status" value="1"/>
</dbReference>
<dbReference type="PANTHER" id="PTHR33508:SF1">
    <property type="entry name" value="UPF0056 MEMBRANE PROTEIN YHCE"/>
    <property type="match status" value="1"/>
</dbReference>
<dbReference type="Pfam" id="PF01914">
    <property type="entry name" value="MarC"/>
    <property type="match status" value="1"/>
</dbReference>
<reference key="1">
    <citation type="journal article" date="1996" name="Science">
        <title>Complete genome sequence of the methanogenic archaeon, Methanococcus jannaschii.</title>
        <authorList>
            <person name="Bult C.J."/>
            <person name="White O."/>
            <person name="Olsen G.J."/>
            <person name="Zhou L."/>
            <person name="Fleischmann R.D."/>
            <person name="Sutton G.G."/>
            <person name="Blake J.A."/>
            <person name="FitzGerald L.M."/>
            <person name="Clayton R.A."/>
            <person name="Gocayne J.D."/>
            <person name="Kerlavage A.R."/>
            <person name="Dougherty B.A."/>
            <person name="Tomb J.-F."/>
            <person name="Adams M.D."/>
            <person name="Reich C.I."/>
            <person name="Overbeek R."/>
            <person name="Kirkness E.F."/>
            <person name="Weinstock K.G."/>
            <person name="Merrick J.M."/>
            <person name="Glodek A."/>
            <person name="Scott J.L."/>
            <person name="Geoghagen N.S.M."/>
            <person name="Weidman J.F."/>
            <person name="Fuhrmann J.L."/>
            <person name="Nguyen D."/>
            <person name="Utterback T.R."/>
            <person name="Kelley J.M."/>
            <person name="Peterson J.D."/>
            <person name="Sadow P.W."/>
            <person name="Hanna M.C."/>
            <person name="Cotton M.D."/>
            <person name="Roberts K.M."/>
            <person name="Hurst M.A."/>
            <person name="Kaine B.P."/>
            <person name="Borodovsky M."/>
            <person name="Klenk H.-P."/>
            <person name="Fraser C.M."/>
            <person name="Smith H.O."/>
            <person name="Woese C.R."/>
            <person name="Venter J.C."/>
        </authorList>
    </citation>
    <scope>NUCLEOTIDE SEQUENCE [LARGE SCALE GENOMIC DNA]</scope>
    <source>
        <strain>ATCC 43067 / DSM 2661 / JAL-1 / JCM 10045 / NBRC 100440</strain>
    </source>
</reference>